<feature type="chain" id="PRO_0000266745" description="Small ribosomal subunit protein bS21B">
    <location>
        <begin position="1"/>
        <end position="70"/>
    </location>
</feature>
<name>RS212_RHIEC</name>
<proteinExistence type="inferred from homology"/>
<accession>Q2K474</accession>
<gene>
    <name evidence="1" type="primary">rpsU2</name>
    <name type="ordered locus">RHE_CH03607</name>
</gene>
<protein>
    <recommendedName>
        <fullName evidence="1">Small ribosomal subunit protein bS21B</fullName>
    </recommendedName>
    <alternativeName>
        <fullName evidence="2">30S ribosomal protein S21 2</fullName>
    </alternativeName>
</protein>
<dbReference type="EMBL" id="CP000133">
    <property type="protein sequence ID" value="ABC92362.1"/>
    <property type="molecule type" value="Genomic_DNA"/>
</dbReference>
<dbReference type="SMR" id="Q2K474"/>
<dbReference type="KEGG" id="ret:RHE_CH03607"/>
<dbReference type="eggNOG" id="COG0828">
    <property type="taxonomic scope" value="Bacteria"/>
</dbReference>
<dbReference type="HOGENOM" id="CLU_159258_0_1_5"/>
<dbReference type="OrthoDB" id="9811907at2"/>
<dbReference type="Proteomes" id="UP000001936">
    <property type="component" value="Chromosome"/>
</dbReference>
<dbReference type="GO" id="GO:1990904">
    <property type="term" value="C:ribonucleoprotein complex"/>
    <property type="evidence" value="ECO:0007669"/>
    <property type="project" value="UniProtKB-KW"/>
</dbReference>
<dbReference type="GO" id="GO:0005840">
    <property type="term" value="C:ribosome"/>
    <property type="evidence" value="ECO:0007669"/>
    <property type="project" value="UniProtKB-KW"/>
</dbReference>
<dbReference type="GO" id="GO:0003735">
    <property type="term" value="F:structural constituent of ribosome"/>
    <property type="evidence" value="ECO:0007669"/>
    <property type="project" value="InterPro"/>
</dbReference>
<dbReference type="GO" id="GO:0006412">
    <property type="term" value="P:translation"/>
    <property type="evidence" value="ECO:0007669"/>
    <property type="project" value="UniProtKB-UniRule"/>
</dbReference>
<dbReference type="Gene3D" id="1.20.5.1150">
    <property type="entry name" value="Ribosomal protein S8"/>
    <property type="match status" value="1"/>
</dbReference>
<dbReference type="HAMAP" id="MF_00358">
    <property type="entry name" value="Ribosomal_bS21"/>
    <property type="match status" value="1"/>
</dbReference>
<dbReference type="InterPro" id="IPR001911">
    <property type="entry name" value="Ribosomal_bS21"/>
</dbReference>
<dbReference type="InterPro" id="IPR018278">
    <property type="entry name" value="Ribosomal_bS21_CS"/>
</dbReference>
<dbReference type="InterPro" id="IPR038380">
    <property type="entry name" value="Ribosomal_bS21_sf"/>
</dbReference>
<dbReference type="NCBIfam" id="TIGR00030">
    <property type="entry name" value="S21p"/>
    <property type="match status" value="1"/>
</dbReference>
<dbReference type="PANTHER" id="PTHR21109">
    <property type="entry name" value="MITOCHONDRIAL 28S RIBOSOMAL PROTEIN S21"/>
    <property type="match status" value="1"/>
</dbReference>
<dbReference type="PANTHER" id="PTHR21109:SF0">
    <property type="entry name" value="SMALL RIBOSOMAL SUBUNIT PROTEIN BS21M"/>
    <property type="match status" value="1"/>
</dbReference>
<dbReference type="Pfam" id="PF01165">
    <property type="entry name" value="Ribosomal_S21"/>
    <property type="match status" value="1"/>
</dbReference>
<dbReference type="PRINTS" id="PR00976">
    <property type="entry name" value="RIBOSOMALS21"/>
</dbReference>
<dbReference type="PROSITE" id="PS01181">
    <property type="entry name" value="RIBOSOMAL_S21"/>
    <property type="match status" value="1"/>
</dbReference>
<reference key="1">
    <citation type="journal article" date="2006" name="Proc. Natl. Acad. Sci. U.S.A.">
        <title>The partitioned Rhizobium etli genome: genetic and metabolic redundancy in seven interacting replicons.</title>
        <authorList>
            <person name="Gonzalez V."/>
            <person name="Santamaria R.I."/>
            <person name="Bustos P."/>
            <person name="Hernandez-Gonzalez I."/>
            <person name="Medrano-Soto A."/>
            <person name="Moreno-Hagelsieb G."/>
            <person name="Janga S.C."/>
            <person name="Ramirez M.A."/>
            <person name="Jimenez-Jacinto V."/>
            <person name="Collado-Vides J."/>
            <person name="Davila G."/>
        </authorList>
    </citation>
    <scope>NUCLEOTIDE SEQUENCE [LARGE SCALE GENOMIC DNA]</scope>
    <source>
        <strain>ATCC 51251 / DSM 11541 / JCM 21823 / NBRC 15573 / CFN 42</strain>
    </source>
</reference>
<sequence>MQVLVRDNNVDQALRALKKKMQREGIFREMKMRDYYEKPSQKRAREKAEAVRRVRKLARKRAQREGLVAR</sequence>
<keyword id="KW-1185">Reference proteome</keyword>
<keyword id="KW-0687">Ribonucleoprotein</keyword>
<keyword id="KW-0689">Ribosomal protein</keyword>
<comment type="similarity">
    <text evidence="1">Belongs to the bacterial ribosomal protein bS21 family.</text>
</comment>
<evidence type="ECO:0000255" key="1">
    <source>
        <dbReference type="HAMAP-Rule" id="MF_00358"/>
    </source>
</evidence>
<evidence type="ECO:0000305" key="2"/>
<organism>
    <name type="scientific">Rhizobium etli (strain ATCC 51251 / DSM 11541 / JCM 21823 / NBRC 15573 / CFN 42)</name>
    <dbReference type="NCBI Taxonomy" id="347834"/>
    <lineage>
        <taxon>Bacteria</taxon>
        <taxon>Pseudomonadati</taxon>
        <taxon>Pseudomonadota</taxon>
        <taxon>Alphaproteobacteria</taxon>
        <taxon>Hyphomicrobiales</taxon>
        <taxon>Rhizobiaceae</taxon>
        <taxon>Rhizobium/Agrobacterium group</taxon>
        <taxon>Rhizobium</taxon>
    </lineage>
</organism>